<organism>
    <name type="scientific">Xylella fastidiosa (strain 9a5c)</name>
    <dbReference type="NCBI Taxonomy" id="160492"/>
    <lineage>
        <taxon>Bacteria</taxon>
        <taxon>Pseudomonadati</taxon>
        <taxon>Pseudomonadota</taxon>
        <taxon>Gammaproteobacteria</taxon>
        <taxon>Lysobacterales</taxon>
        <taxon>Lysobacteraceae</taxon>
        <taxon>Xylella</taxon>
    </lineage>
</organism>
<protein>
    <recommendedName>
        <fullName evidence="1">Aspartate--tRNA ligase</fullName>
        <ecNumber evidence="1">6.1.1.12</ecNumber>
    </recommendedName>
    <alternativeName>
        <fullName evidence="1">Aspartyl-tRNA synthetase</fullName>
        <shortName evidence="1">AspRS</shortName>
    </alternativeName>
</protein>
<sequence length="589" mass="65809">MRTHFCGLIDETLIGHTVTLAGWTDVARNLGGVCFIDLRDHEGIVQVTVDSRAIDQNNSELFKVASGLSYEDVLQVEGVVCARHAVNDKIKTGKVEVIATKIKILNKAAPLPFHAHENPGEDIRLKYRYLDLRRPEMQRMQRTRIKLVQALRRHLDMHGFQDIETPILTKATPEGARDFLVPARMHPGEFYALPQSPQLFKQILMVAGFDRYYQIARCFRDEALRADRQLEFTQLDMEFAFVSERDVQDFVEEMIRRVFKEVAGIELDTTFPRMTWTEAMRRFGSDKPDLRINLELIDVAALVADSTFTPFTDAVAHPNGRVAALRIPSGAVLSRKQIDEYAAYTAKYGATGLAYAKLAPIGEITSPIAKFFSEDAFAALLSHIGAEKGDIVFFGAGNYNKVSDFMGALRLKAGKDFALITADWRPLWVTDFPMFEWDEEAQRYVALHHPFTAPAAIDDIDELRAHARTALSRGYDMVLNGNEIGGGSIRIHRPEMQRAVFELLGITEDEARAKFGFLLDALNYGAPPHGGIAFGIDRIAALIAGTESIRDVIPFPKTTGAQCLMTDAPSSISEEQLSEIHVITKKPTP</sequence>
<gene>
    <name evidence="1" type="primary">aspS</name>
    <name type="ordered locus">XF_1856</name>
</gene>
<proteinExistence type="inferred from homology"/>
<comment type="function">
    <text evidence="1">Catalyzes the attachment of L-aspartate to tRNA(Asp) in a two-step reaction: L-aspartate is first activated by ATP to form Asp-AMP and then transferred to the acceptor end of tRNA(Asp).</text>
</comment>
<comment type="catalytic activity">
    <reaction evidence="1">
        <text>tRNA(Asp) + L-aspartate + ATP = L-aspartyl-tRNA(Asp) + AMP + diphosphate</text>
        <dbReference type="Rhea" id="RHEA:19649"/>
        <dbReference type="Rhea" id="RHEA-COMP:9660"/>
        <dbReference type="Rhea" id="RHEA-COMP:9678"/>
        <dbReference type="ChEBI" id="CHEBI:29991"/>
        <dbReference type="ChEBI" id="CHEBI:30616"/>
        <dbReference type="ChEBI" id="CHEBI:33019"/>
        <dbReference type="ChEBI" id="CHEBI:78442"/>
        <dbReference type="ChEBI" id="CHEBI:78516"/>
        <dbReference type="ChEBI" id="CHEBI:456215"/>
        <dbReference type="EC" id="6.1.1.12"/>
    </reaction>
</comment>
<comment type="subunit">
    <text evidence="1">Homodimer.</text>
</comment>
<comment type="subcellular location">
    <subcellularLocation>
        <location evidence="1">Cytoplasm</location>
    </subcellularLocation>
</comment>
<comment type="similarity">
    <text evidence="1">Belongs to the class-II aminoacyl-tRNA synthetase family. Type 1 subfamily.</text>
</comment>
<keyword id="KW-0030">Aminoacyl-tRNA synthetase</keyword>
<keyword id="KW-0067">ATP-binding</keyword>
<keyword id="KW-0963">Cytoplasm</keyword>
<keyword id="KW-0436">Ligase</keyword>
<keyword id="KW-0547">Nucleotide-binding</keyword>
<keyword id="KW-0648">Protein biosynthesis</keyword>
<name>SYD_XYLFA</name>
<dbReference type="EC" id="6.1.1.12" evidence="1"/>
<dbReference type="EMBL" id="AE003849">
    <property type="protein sequence ID" value="AAF84662.1"/>
    <property type="molecule type" value="Genomic_DNA"/>
</dbReference>
<dbReference type="PIR" id="H82627">
    <property type="entry name" value="H82627"/>
</dbReference>
<dbReference type="RefSeq" id="WP_010894322.1">
    <property type="nucleotide sequence ID" value="NC_002488.3"/>
</dbReference>
<dbReference type="SMR" id="Q9PCC5"/>
<dbReference type="STRING" id="160492.XF_1856"/>
<dbReference type="KEGG" id="xfa:XF_1856"/>
<dbReference type="PATRIC" id="fig|160492.11.peg.1976"/>
<dbReference type="eggNOG" id="COG0173">
    <property type="taxonomic scope" value="Bacteria"/>
</dbReference>
<dbReference type="HOGENOM" id="CLU_014330_3_2_6"/>
<dbReference type="Proteomes" id="UP000000812">
    <property type="component" value="Chromosome"/>
</dbReference>
<dbReference type="GO" id="GO:0005737">
    <property type="term" value="C:cytoplasm"/>
    <property type="evidence" value="ECO:0007669"/>
    <property type="project" value="UniProtKB-SubCell"/>
</dbReference>
<dbReference type="GO" id="GO:0004815">
    <property type="term" value="F:aspartate-tRNA ligase activity"/>
    <property type="evidence" value="ECO:0007669"/>
    <property type="project" value="UniProtKB-UniRule"/>
</dbReference>
<dbReference type="GO" id="GO:0005524">
    <property type="term" value="F:ATP binding"/>
    <property type="evidence" value="ECO:0007669"/>
    <property type="project" value="UniProtKB-UniRule"/>
</dbReference>
<dbReference type="GO" id="GO:0003676">
    <property type="term" value="F:nucleic acid binding"/>
    <property type="evidence" value="ECO:0007669"/>
    <property type="project" value="InterPro"/>
</dbReference>
<dbReference type="GO" id="GO:0006422">
    <property type="term" value="P:aspartyl-tRNA aminoacylation"/>
    <property type="evidence" value="ECO:0007669"/>
    <property type="project" value="UniProtKB-UniRule"/>
</dbReference>
<dbReference type="CDD" id="cd00777">
    <property type="entry name" value="AspRS_core"/>
    <property type="match status" value="1"/>
</dbReference>
<dbReference type="CDD" id="cd04317">
    <property type="entry name" value="EcAspRS_like_N"/>
    <property type="match status" value="1"/>
</dbReference>
<dbReference type="Gene3D" id="3.30.930.10">
    <property type="entry name" value="Bira Bifunctional Protein, Domain 2"/>
    <property type="match status" value="1"/>
</dbReference>
<dbReference type="Gene3D" id="3.30.1360.30">
    <property type="entry name" value="GAD-like domain"/>
    <property type="match status" value="1"/>
</dbReference>
<dbReference type="Gene3D" id="2.40.50.140">
    <property type="entry name" value="Nucleic acid-binding proteins"/>
    <property type="match status" value="1"/>
</dbReference>
<dbReference type="HAMAP" id="MF_00044">
    <property type="entry name" value="Asp_tRNA_synth_type1"/>
    <property type="match status" value="1"/>
</dbReference>
<dbReference type="InterPro" id="IPR004364">
    <property type="entry name" value="Aa-tRNA-synt_II"/>
</dbReference>
<dbReference type="InterPro" id="IPR006195">
    <property type="entry name" value="aa-tRNA-synth_II"/>
</dbReference>
<dbReference type="InterPro" id="IPR045864">
    <property type="entry name" value="aa-tRNA-synth_II/BPL/LPL"/>
</dbReference>
<dbReference type="InterPro" id="IPR004524">
    <property type="entry name" value="Asp-tRNA-ligase_1"/>
</dbReference>
<dbReference type="InterPro" id="IPR047089">
    <property type="entry name" value="Asp-tRNA-ligase_1_N"/>
</dbReference>
<dbReference type="InterPro" id="IPR002312">
    <property type="entry name" value="Asp/Asn-tRNA-synth_IIb"/>
</dbReference>
<dbReference type="InterPro" id="IPR047090">
    <property type="entry name" value="AspRS_core"/>
</dbReference>
<dbReference type="InterPro" id="IPR004115">
    <property type="entry name" value="GAD-like_sf"/>
</dbReference>
<dbReference type="InterPro" id="IPR029351">
    <property type="entry name" value="GAD_dom"/>
</dbReference>
<dbReference type="InterPro" id="IPR012340">
    <property type="entry name" value="NA-bd_OB-fold"/>
</dbReference>
<dbReference type="InterPro" id="IPR004365">
    <property type="entry name" value="NA-bd_OB_tRNA"/>
</dbReference>
<dbReference type="NCBIfam" id="TIGR00459">
    <property type="entry name" value="aspS_bact"/>
    <property type="match status" value="1"/>
</dbReference>
<dbReference type="NCBIfam" id="NF001750">
    <property type="entry name" value="PRK00476.1"/>
    <property type="match status" value="1"/>
</dbReference>
<dbReference type="PANTHER" id="PTHR22594:SF5">
    <property type="entry name" value="ASPARTATE--TRNA LIGASE, MITOCHONDRIAL"/>
    <property type="match status" value="1"/>
</dbReference>
<dbReference type="PANTHER" id="PTHR22594">
    <property type="entry name" value="ASPARTYL/LYSYL-TRNA SYNTHETASE"/>
    <property type="match status" value="1"/>
</dbReference>
<dbReference type="Pfam" id="PF02938">
    <property type="entry name" value="GAD"/>
    <property type="match status" value="1"/>
</dbReference>
<dbReference type="Pfam" id="PF00152">
    <property type="entry name" value="tRNA-synt_2"/>
    <property type="match status" value="1"/>
</dbReference>
<dbReference type="Pfam" id="PF01336">
    <property type="entry name" value="tRNA_anti-codon"/>
    <property type="match status" value="1"/>
</dbReference>
<dbReference type="PRINTS" id="PR01042">
    <property type="entry name" value="TRNASYNTHASP"/>
</dbReference>
<dbReference type="SUPFAM" id="SSF55681">
    <property type="entry name" value="Class II aaRS and biotin synthetases"/>
    <property type="match status" value="1"/>
</dbReference>
<dbReference type="SUPFAM" id="SSF55261">
    <property type="entry name" value="GAD domain-like"/>
    <property type="match status" value="1"/>
</dbReference>
<dbReference type="SUPFAM" id="SSF50249">
    <property type="entry name" value="Nucleic acid-binding proteins"/>
    <property type="match status" value="1"/>
</dbReference>
<dbReference type="PROSITE" id="PS50862">
    <property type="entry name" value="AA_TRNA_LIGASE_II"/>
    <property type="match status" value="1"/>
</dbReference>
<accession>Q9PCC5</accession>
<evidence type="ECO:0000255" key="1">
    <source>
        <dbReference type="HAMAP-Rule" id="MF_00044"/>
    </source>
</evidence>
<reference key="1">
    <citation type="journal article" date="2000" name="Nature">
        <title>The genome sequence of the plant pathogen Xylella fastidiosa.</title>
        <authorList>
            <person name="Simpson A.J.G."/>
            <person name="Reinach F.C."/>
            <person name="Arruda P."/>
            <person name="Abreu F.A."/>
            <person name="Acencio M."/>
            <person name="Alvarenga R."/>
            <person name="Alves L.M.C."/>
            <person name="Araya J.E."/>
            <person name="Baia G.S."/>
            <person name="Baptista C.S."/>
            <person name="Barros M.H."/>
            <person name="Bonaccorsi E.D."/>
            <person name="Bordin S."/>
            <person name="Bove J.M."/>
            <person name="Briones M.R.S."/>
            <person name="Bueno M.R.P."/>
            <person name="Camargo A.A."/>
            <person name="Camargo L.E.A."/>
            <person name="Carraro D.M."/>
            <person name="Carrer H."/>
            <person name="Colauto N.B."/>
            <person name="Colombo C."/>
            <person name="Costa F.F."/>
            <person name="Costa M.C.R."/>
            <person name="Costa-Neto C.M."/>
            <person name="Coutinho L.L."/>
            <person name="Cristofani M."/>
            <person name="Dias-Neto E."/>
            <person name="Docena C."/>
            <person name="El-Dorry H."/>
            <person name="Facincani A.P."/>
            <person name="Ferreira A.J.S."/>
            <person name="Ferreira V.C.A."/>
            <person name="Ferro J.A."/>
            <person name="Fraga J.S."/>
            <person name="Franca S.C."/>
            <person name="Franco M.C."/>
            <person name="Frohme M."/>
            <person name="Furlan L.R."/>
            <person name="Garnier M."/>
            <person name="Goldman G.H."/>
            <person name="Goldman M.H.S."/>
            <person name="Gomes S.L."/>
            <person name="Gruber A."/>
            <person name="Ho P.L."/>
            <person name="Hoheisel J.D."/>
            <person name="Junqueira M.L."/>
            <person name="Kemper E.L."/>
            <person name="Kitajima J.P."/>
            <person name="Krieger J.E."/>
            <person name="Kuramae E.E."/>
            <person name="Laigret F."/>
            <person name="Lambais M.R."/>
            <person name="Leite L.C.C."/>
            <person name="Lemos E.G.M."/>
            <person name="Lemos M.V.F."/>
            <person name="Lopes S.A."/>
            <person name="Lopes C.R."/>
            <person name="Machado J.A."/>
            <person name="Machado M.A."/>
            <person name="Madeira A.M.B.N."/>
            <person name="Madeira H.M.F."/>
            <person name="Marino C.L."/>
            <person name="Marques M.V."/>
            <person name="Martins E.A.L."/>
            <person name="Martins E.M.F."/>
            <person name="Matsukuma A.Y."/>
            <person name="Menck C.F.M."/>
            <person name="Miracca E.C."/>
            <person name="Miyaki C.Y."/>
            <person name="Monteiro-Vitorello C.B."/>
            <person name="Moon D.H."/>
            <person name="Nagai M.A."/>
            <person name="Nascimento A.L.T.O."/>
            <person name="Netto L.E.S."/>
            <person name="Nhani A. Jr."/>
            <person name="Nobrega F.G."/>
            <person name="Nunes L.R."/>
            <person name="Oliveira M.A."/>
            <person name="de Oliveira M.C."/>
            <person name="de Oliveira R.C."/>
            <person name="Palmieri D.A."/>
            <person name="Paris A."/>
            <person name="Peixoto B.R."/>
            <person name="Pereira G.A.G."/>
            <person name="Pereira H.A. Jr."/>
            <person name="Pesquero J.B."/>
            <person name="Quaggio R.B."/>
            <person name="Roberto P.G."/>
            <person name="Rodrigues V."/>
            <person name="de Rosa A.J.M."/>
            <person name="de Rosa V.E. Jr."/>
            <person name="de Sa R.G."/>
            <person name="Santelli R.V."/>
            <person name="Sawasaki H.E."/>
            <person name="da Silva A.C.R."/>
            <person name="da Silva A.M."/>
            <person name="da Silva F.R."/>
            <person name="Silva W.A. Jr."/>
            <person name="da Silveira J.F."/>
            <person name="Silvestri M.L.Z."/>
            <person name="Siqueira W.J."/>
            <person name="de Souza A.A."/>
            <person name="de Souza A.P."/>
            <person name="Terenzi M.F."/>
            <person name="Truffi D."/>
            <person name="Tsai S.M."/>
            <person name="Tsuhako M.H."/>
            <person name="Vallada H."/>
            <person name="Van Sluys M.A."/>
            <person name="Verjovski-Almeida S."/>
            <person name="Vettore A.L."/>
            <person name="Zago M.A."/>
            <person name="Zatz M."/>
            <person name="Meidanis J."/>
            <person name="Setubal J.C."/>
        </authorList>
    </citation>
    <scope>NUCLEOTIDE SEQUENCE [LARGE SCALE GENOMIC DNA]</scope>
    <source>
        <strain>9a5c</strain>
    </source>
</reference>
<feature type="chain" id="PRO_0000110984" description="Aspartate--tRNA ligase">
    <location>
        <begin position="1"/>
        <end position="589"/>
    </location>
</feature>
<feature type="region of interest" description="Aspartate" evidence="1">
    <location>
        <begin position="198"/>
        <end position="201"/>
    </location>
</feature>
<feature type="binding site" evidence="1">
    <location>
        <position position="174"/>
    </location>
    <ligand>
        <name>L-aspartate</name>
        <dbReference type="ChEBI" id="CHEBI:29991"/>
    </ligand>
</feature>
<feature type="binding site" evidence="1">
    <location>
        <begin position="220"/>
        <end position="222"/>
    </location>
    <ligand>
        <name>ATP</name>
        <dbReference type="ChEBI" id="CHEBI:30616"/>
    </ligand>
</feature>
<feature type="binding site" evidence="1">
    <location>
        <position position="220"/>
    </location>
    <ligand>
        <name>L-aspartate</name>
        <dbReference type="ChEBI" id="CHEBI:29991"/>
    </ligand>
</feature>
<feature type="binding site" evidence="1">
    <location>
        <position position="229"/>
    </location>
    <ligand>
        <name>ATP</name>
        <dbReference type="ChEBI" id="CHEBI:30616"/>
    </ligand>
</feature>
<feature type="binding site" evidence="1">
    <location>
        <position position="448"/>
    </location>
    <ligand>
        <name>L-aspartate</name>
        <dbReference type="ChEBI" id="CHEBI:29991"/>
    </ligand>
</feature>
<feature type="binding site" evidence="1">
    <location>
        <position position="483"/>
    </location>
    <ligand>
        <name>ATP</name>
        <dbReference type="ChEBI" id="CHEBI:30616"/>
    </ligand>
</feature>
<feature type="binding site" evidence="1">
    <location>
        <position position="490"/>
    </location>
    <ligand>
        <name>L-aspartate</name>
        <dbReference type="ChEBI" id="CHEBI:29991"/>
    </ligand>
</feature>
<feature type="binding site" evidence="1">
    <location>
        <begin position="535"/>
        <end position="538"/>
    </location>
    <ligand>
        <name>ATP</name>
        <dbReference type="ChEBI" id="CHEBI:30616"/>
    </ligand>
</feature>